<protein>
    <recommendedName>
        <fullName evidence="1">Met repressor</fullName>
    </recommendedName>
    <alternativeName>
        <fullName evidence="1">Met regulon regulatory protein MetJ</fullName>
    </alternativeName>
</protein>
<proteinExistence type="inferred from homology"/>
<keyword id="KW-0028">Amino-acid biosynthesis</keyword>
<keyword id="KW-0963">Cytoplasm</keyword>
<keyword id="KW-0238">DNA-binding</keyword>
<keyword id="KW-0486">Methionine biosynthesis</keyword>
<keyword id="KW-0678">Repressor</keyword>
<keyword id="KW-0804">Transcription</keyword>
<keyword id="KW-0805">Transcription regulation</keyword>
<dbReference type="EMBL" id="CP000668">
    <property type="protein sequence ID" value="ABP42138.1"/>
    <property type="molecule type" value="Genomic_DNA"/>
</dbReference>
<dbReference type="RefSeq" id="WP_002208935.1">
    <property type="nucleotide sequence ID" value="NZ_CP009715.1"/>
</dbReference>
<dbReference type="SMR" id="A4TS76"/>
<dbReference type="GeneID" id="57974482"/>
<dbReference type="KEGG" id="ypp:YPDSF_3793"/>
<dbReference type="PATRIC" id="fig|386656.14.peg.727"/>
<dbReference type="GO" id="GO:0005737">
    <property type="term" value="C:cytoplasm"/>
    <property type="evidence" value="ECO:0007669"/>
    <property type="project" value="UniProtKB-SubCell"/>
</dbReference>
<dbReference type="GO" id="GO:0003677">
    <property type="term" value="F:DNA binding"/>
    <property type="evidence" value="ECO:0007669"/>
    <property type="project" value="UniProtKB-KW"/>
</dbReference>
<dbReference type="GO" id="GO:0003700">
    <property type="term" value="F:DNA-binding transcription factor activity"/>
    <property type="evidence" value="ECO:0007669"/>
    <property type="project" value="InterPro"/>
</dbReference>
<dbReference type="GO" id="GO:0009086">
    <property type="term" value="P:methionine biosynthetic process"/>
    <property type="evidence" value="ECO:0007669"/>
    <property type="project" value="UniProtKB-UniRule"/>
</dbReference>
<dbReference type="GO" id="GO:0045892">
    <property type="term" value="P:negative regulation of DNA-templated transcription"/>
    <property type="evidence" value="ECO:0007669"/>
    <property type="project" value="UniProtKB-UniRule"/>
</dbReference>
<dbReference type="CDD" id="cd00490">
    <property type="entry name" value="Met_repressor_MetJ"/>
    <property type="match status" value="1"/>
</dbReference>
<dbReference type="FunFam" id="1.10.140.10:FF:000001">
    <property type="entry name" value="Met repressor"/>
    <property type="match status" value="1"/>
</dbReference>
<dbReference type="Gene3D" id="1.10.140.10">
    <property type="entry name" value="MET Apo-Repressor, subunit A"/>
    <property type="match status" value="1"/>
</dbReference>
<dbReference type="HAMAP" id="MF_00744">
    <property type="entry name" value="MetJ"/>
    <property type="match status" value="1"/>
</dbReference>
<dbReference type="InterPro" id="IPR002084">
    <property type="entry name" value="Met_repressor_MetJ"/>
</dbReference>
<dbReference type="InterPro" id="IPR023453">
    <property type="entry name" value="Met_repressor_MetJ_dom_sf"/>
</dbReference>
<dbReference type="InterPro" id="IPR010985">
    <property type="entry name" value="Ribbon_hlx_hlx"/>
</dbReference>
<dbReference type="NCBIfam" id="NF003622">
    <property type="entry name" value="PRK05264.1"/>
    <property type="match status" value="1"/>
</dbReference>
<dbReference type="Pfam" id="PF01340">
    <property type="entry name" value="MetJ"/>
    <property type="match status" value="1"/>
</dbReference>
<dbReference type="SUPFAM" id="SSF47598">
    <property type="entry name" value="Ribbon-helix-helix"/>
    <property type="match status" value="1"/>
</dbReference>
<evidence type="ECO:0000255" key="1">
    <source>
        <dbReference type="HAMAP-Rule" id="MF_00744"/>
    </source>
</evidence>
<sequence length="105" mass="12149">MAEWNGEYVSPYAEHGKKSKQVKKITVSIPLKVLKILTDERTRRQVNNLRHATNSELLCEAFLHAFTGQPLPNDEDLRKERSDEIPEAAKILMRELGVDPDTWEY</sequence>
<name>METJ_YERPP</name>
<reference key="1">
    <citation type="submission" date="2007-02" db="EMBL/GenBank/DDBJ databases">
        <title>Complete sequence of chromosome of Yersinia pestis Pestoides F.</title>
        <authorList>
            <consortium name="US DOE Joint Genome Institute"/>
            <person name="Copeland A."/>
            <person name="Lucas S."/>
            <person name="Lapidus A."/>
            <person name="Barry K."/>
            <person name="Detter J.C."/>
            <person name="Glavina del Rio T."/>
            <person name="Hammon N."/>
            <person name="Israni S."/>
            <person name="Dalin E."/>
            <person name="Tice H."/>
            <person name="Pitluck S."/>
            <person name="Di Bartolo G."/>
            <person name="Chain P."/>
            <person name="Malfatti S."/>
            <person name="Shin M."/>
            <person name="Vergez L."/>
            <person name="Schmutz J."/>
            <person name="Larimer F."/>
            <person name="Land M."/>
            <person name="Hauser L."/>
            <person name="Worsham P."/>
            <person name="Chu M."/>
            <person name="Bearden S."/>
            <person name="Garcia E."/>
            <person name="Richardson P."/>
        </authorList>
    </citation>
    <scope>NUCLEOTIDE SEQUENCE [LARGE SCALE GENOMIC DNA]</scope>
    <source>
        <strain>Pestoides F</strain>
    </source>
</reference>
<gene>
    <name evidence="1" type="primary">metJ</name>
    <name type="ordered locus">YPDSF_3793</name>
</gene>
<organism>
    <name type="scientific">Yersinia pestis (strain Pestoides F)</name>
    <dbReference type="NCBI Taxonomy" id="386656"/>
    <lineage>
        <taxon>Bacteria</taxon>
        <taxon>Pseudomonadati</taxon>
        <taxon>Pseudomonadota</taxon>
        <taxon>Gammaproteobacteria</taxon>
        <taxon>Enterobacterales</taxon>
        <taxon>Yersiniaceae</taxon>
        <taxon>Yersinia</taxon>
    </lineage>
</organism>
<feature type="chain" id="PRO_1000046504" description="Met repressor">
    <location>
        <begin position="1"/>
        <end position="105"/>
    </location>
</feature>
<accession>A4TS76</accession>
<comment type="function">
    <text evidence="1">This regulatory protein, when combined with SAM (S-adenosylmethionine) represses the expression of the methionine regulon and of enzymes involved in SAM synthesis.</text>
</comment>
<comment type="subunit">
    <text evidence="1">Homodimer.</text>
</comment>
<comment type="subcellular location">
    <subcellularLocation>
        <location evidence="1">Cytoplasm</location>
    </subcellularLocation>
</comment>
<comment type="domain">
    <text>Does not bind DNA by a helix-turn-helix motif.</text>
</comment>
<comment type="similarity">
    <text evidence="1">Belongs to the MetJ family.</text>
</comment>